<organism>
    <name type="scientific">Trichophyton equinum</name>
    <name type="common">Horse ringworm fungus</name>
    <dbReference type="NCBI Taxonomy" id="63418"/>
    <lineage>
        <taxon>Eukaryota</taxon>
        <taxon>Fungi</taxon>
        <taxon>Dikarya</taxon>
        <taxon>Ascomycota</taxon>
        <taxon>Pezizomycotina</taxon>
        <taxon>Eurotiomycetes</taxon>
        <taxon>Eurotiomycetidae</taxon>
        <taxon>Onygenales</taxon>
        <taxon>Arthrodermataceae</taxon>
        <taxon>Trichophyton</taxon>
    </lineage>
</organism>
<accession>B8XGR3</accession>
<reference key="1">
    <citation type="submission" date="2008-10" db="EMBL/GenBank/DDBJ databases">
        <title>Comparing putative pathogenicity factors between Trichophyton tonsurans and Trichophyton equinum.</title>
        <authorList>
            <person name="Preuett B.L."/>
            <person name="Abdel-Rahman S.M."/>
        </authorList>
    </citation>
    <scope>NUCLEOTIDE SEQUENCE [GENOMIC DNA]</scope>
</reference>
<gene>
    <name type="primary">MCPA</name>
</gene>
<feature type="signal peptide" evidence="2">
    <location>
        <begin position="1"/>
        <end position="17"/>
    </location>
</feature>
<feature type="propeptide" id="PRO_0000384103" description="Activation peptide" evidence="1">
    <location>
        <begin position="18"/>
        <end position="112"/>
    </location>
</feature>
<feature type="chain" id="PRO_0000384104" description="Metallocarboxypeptidase A">
    <location>
        <begin position="113"/>
        <end position="422"/>
    </location>
</feature>
<feature type="domain" description="Peptidase M14" evidence="3">
    <location>
        <begin position="119"/>
        <end position="419"/>
    </location>
</feature>
<feature type="active site" description="Proton donor/acceptor" evidence="3">
    <location>
        <position position="385"/>
    </location>
</feature>
<feature type="binding site" evidence="1">
    <location>
        <begin position="179"/>
        <end position="182"/>
    </location>
    <ligand>
        <name>substrate</name>
    </ligand>
</feature>
<feature type="binding site" evidence="3">
    <location>
        <position position="179"/>
    </location>
    <ligand>
        <name>Zn(2+)</name>
        <dbReference type="ChEBI" id="CHEBI:29105"/>
        <note>catalytic</note>
    </ligand>
</feature>
<feature type="binding site" evidence="3">
    <location>
        <position position="182"/>
    </location>
    <ligand>
        <name>Zn(2+)</name>
        <dbReference type="ChEBI" id="CHEBI:29105"/>
        <note>catalytic</note>
    </ligand>
</feature>
<feature type="binding site" evidence="1">
    <location>
        <position position="237"/>
    </location>
    <ligand>
        <name>substrate</name>
    </ligand>
</feature>
<feature type="binding site" evidence="1">
    <location>
        <begin position="254"/>
        <end position="255"/>
    </location>
    <ligand>
        <name>substrate</name>
    </ligand>
</feature>
<feature type="binding site" evidence="3">
    <location>
        <position position="309"/>
    </location>
    <ligand>
        <name>Zn(2+)</name>
        <dbReference type="ChEBI" id="CHEBI:29105"/>
        <note>catalytic</note>
    </ligand>
</feature>
<feature type="binding site" evidence="1">
    <location>
        <begin position="310"/>
        <end position="311"/>
    </location>
    <ligand>
        <name>substrate</name>
    </ligand>
</feature>
<feature type="disulfide bond" evidence="1">
    <location>
        <begin position="248"/>
        <end position="271"/>
    </location>
</feature>
<dbReference type="EC" id="3.4.17.-"/>
<dbReference type="EMBL" id="FJ348245">
    <property type="protein sequence ID" value="ACL37335.1"/>
    <property type="molecule type" value="Genomic_DNA"/>
</dbReference>
<dbReference type="SMR" id="B8XGR3"/>
<dbReference type="MEROPS" id="M14.014"/>
<dbReference type="VEuPathDB" id="FungiDB:TEQG_08111"/>
<dbReference type="GO" id="GO:0005576">
    <property type="term" value="C:extracellular region"/>
    <property type="evidence" value="ECO:0007669"/>
    <property type="project" value="UniProtKB-SubCell"/>
</dbReference>
<dbReference type="GO" id="GO:0004181">
    <property type="term" value="F:metallocarboxypeptidase activity"/>
    <property type="evidence" value="ECO:0007669"/>
    <property type="project" value="InterPro"/>
</dbReference>
<dbReference type="GO" id="GO:0008270">
    <property type="term" value="F:zinc ion binding"/>
    <property type="evidence" value="ECO:0007669"/>
    <property type="project" value="InterPro"/>
</dbReference>
<dbReference type="GO" id="GO:0006508">
    <property type="term" value="P:proteolysis"/>
    <property type="evidence" value="ECO:0007669"/>
    <property type="project" value="UniProtKB-KW"/>
</dbReference>
<dbReference type="CDD" id="cd03860">
    <property type="entry name" value="M14_CP_A-B_like"/>
    <property type="match status" value="1"/>
</dbReference>
<dbReference type="FunFam" id="3.40.630.10:FF:000040">
    <property type="entry name" value="zinc carboxypeptidase"/>
    <property type="match status" value="1"/>
</dbReference>
<dbReference type="Gene3D" id="3.30.70.340">
    <property type="entry name" value="Metallocarboxypeptidase-like"/>
    <property type="match status" value="1"/>
</dbReference>
<dbReference type="Gene3D" id="3.40.630.10">
    <property type="entry name" value="Zn peptidases"/>
    <property type="match status" value="1"/>
</dbReference>
<dbReference type="InterPro" id="IPR036990">
    <property type="entry name" value="M14A-like_propep"/>
</dbReference>
<dbReference type="InterPro" id="IPR003146">
    <property type="entry name" value="M14A_act_pep"/>
</dbReference>
<dbReference type="InterPro" id="IPR000834">
    <property type="entry name" value="Peptidase_M14"/>
</dbReference>
<dbReference type="PANTHER" id="PTHR11705">
    <property type="entry name" value="PROTEASE FAMILY M14 CARBOXYPEPTIDASE A,B"/>
    <property type="match status" value="1"/>
</dbReference>
<dbReference type="PANTHER" id="PTHR11705:SF143">
    <property type="entry name" value="SLL0236 PROTEIN"/>
    <property type="match status" value="1"/>
</dbReference>
<dbReference type="Pfam" id="PF00246">
    <property type="entry name" value="Peptidase_M14"/>
    <property type="match status" value="1"/>
</dbReference>
<dbReference type="Pfam" id="PF02244">
    <property type="entry name" value="Propep_M14"/>
    <property type="match status" value="1"/>
</dbReference>
<dbReference type="PRINTS" id="PR00765">
    <property type="entry name" value="CRBOXYPTASEA"/>
</dbReference>
<dbReference type="SMART" id="SM00631">
    <property type="entry name" value="Zn_pept"/>
    <property type="match status" value="1"/>
</dbReference>
<dbReference type="SUPFAM" id="SSF54897">
    <property type="entry name" value="Protease propeptides/inhibitors"/>
    <property type="match status" value="1"/>
</dbReference>
<dbReference type="SUPFAM" id="SSF53187">
    <property type="entry name" value="Zn-dependent exopeptidases"/>
    <property type="match status" value="1"/>
</dbReference>
<dbReference type="PROSITE" id="PS00132">
    <property type="entry name" value="CARBOXYPEPT_ZN_1"/>
    <property type="match status" value="1"/>
</dbReference>
<dbReference type="PROSITE" id="PS52035">
    <property type="entry name" value="PEPTIDASE_M14"/>
    <property type="match status" value="1"/>
</dbReference>
<comment type="function">
    <text evidence="1">Extracellular metalloprotease that contributes to pathogenicity.</text>
</comment>
<comment type="cofactor">
    <cofactor evidence="1">
        <name>Zn(2+)</name>
        <dbReference type="ChEBI" id="CHEBI:29105"/>
    </cofactor>
    <text evidence="1">Binds 1 zinc ion per subunit.</text>
</comment>
<comment type="subcellular location">
    <subcellularLocation>
        <location evidence="1">Secreted</location>
    </subcellularLocation>
</comment>
<comment type="similarity">
    <text evidence="4">Belongs to the peptidase M14 family.</text>
</comment>
<protein>
    <recommendedName>
        <fullName>Metallocarboxypeptidase A</fullName>
        <shortName>MCPA</shortName>
        <ecNumber>3.4.17.-</ecNumber>
    </recommendedName>
    <alternativeName>
        <fullName>Carboxypeptidase M14A</fullName>
    </alternativeName>
</protein>
<sequence length="422" mass="47194">MRSVLSLALLAANVVTAAVVSPFDYSGYKVIRVPTQKDNVKEVQRIITDLNLDTWKYPKSEGQNADIVVPPSQITSFMERISGMSMEMMHEDLGMSISNETSFEAYSAGYAPDINWFKSYHSYQDHISYLQDLQGLFRTRSEYVDAGKSHEGRTIPALHIWGSGGKNSKPAIIFHGTIHAREWITTMVTEYLAWSLLSQYNKNADITSIVDNFDIWVFPIVNPDGFAFTQTSNRLWRKNRQPNPNARCPGRDLNRNYPYQWVGPGSSSNPCSDTYRGAQPGDGTEIKVHIANMKRIASYHGIAMFVDWHSYGQLFMSPYGYSCTARPPTDARHQELSRIFAQALRAVHGTPYRTGPICNTIYQVNGDSVDYALEVLKVKLSLTAELRDTGARGFVLPADQIIPSGEETLAGTVAMLKAVIRG</sequence>
<name>MCPA_TRIEQ</name>
<evidence type="ECO:0000250" key="1"/>
<evidence type="ECO:0000255" key="2"/>
<evidence type="ECO:0000255" key="3">
    <source>
        <dbReference type="PROSITE-ProRule" id="PRU01379"/>
    </source>
</evidence>
<evidence type="ECO:0000305" key="4"/>
<proteinExistence type="inferred from homology"/>
<keyword id="KW-0121">Carboxypeptidase</keyword>
<keyword id="KW-1015">Disulfide bond</keyword>
<keyword id="KW-0378">Hydrolase</keyword>
<keyword id="KW-0479">Metal-binding</keyword>
<keyword id="KW-0482">Metalloprotease</keyword>
<keyword id="KW-0645">Protease</keyword>
<keyword id="KW-0964">Secreted</keyword>
<keyword id="KW-0732">Signal</keyword>
<keyword id="KW-0843">Virulence</keyword>
<keyword id="KW-0862">Zinc</keyword>
<keyword id="KW-0865">Zymogen</keyword>